<organism>
    <name type="scientific">Schizosaccharomyces pombe (strain 972 / ATCC 24843)</name>
    <name type="common">Fission yeast</name>
    <dbReference type="NCBI Taxonomy" id="284812"/>
    <lineage>
        <taxon>Eukaryota</taxon>
        <taxon>Fungi</taxon>
        <taxon>Dikarya</taxon>
        <taxon>Ascomycota</taxon>
        <taxon>Taphrinomycotina</taxon>
        <taxon>Schizosaccharomycetes</taxon>
        <taxon>Schizosaccharomycetales</taxon>
        <taxon>Schizosaccharomycetaceae</taxon>
        <taxon>Schizosaccharomyces</taxon>
    </lineage>
</organism>
<sequence>MATFARMKLCLSGSSQAIPSKGISLVAARFQSTASRASYVTPPYEKLMGKLQQVRKFLPGQKLTLAEKVLYSHLVNPEESFSGVSPSDIRGSLYLKLNPDRVAMQDASAQMALLQFMTCGLEKTMIPASIHCDHLIVGHRGANSDIPDSIANNKEIFDFLQSAAKKYGIQFWGPGSGIIHQIVLENYAAPGGMMLGTDSHTPNAGGLGMIAIGVGGADAVDAMTNTPWELKAPKIIGVNLTGAMSGWTTPKDLILHLAGKLTVRGGTGHIIEYFGPGVASLSCTGMATVCNMGAEVGATTSIFPYTDSMRRYLIATHRAEVADAASEVHSEYNYLAADTGAKYDQIIDINLSELTPSLNGPFTPDLSTPVSKFGEAIEKNKWPKKLSAGLIGSCTNSSYQDMTCVVDVVEQAISAGLKPKVPFLVTPGSEQIRATIERDGITERLEEAGATVLANACGPCIGMWKRTDDIASGEPNAILTSFNRNFRSRNDGNPSTMNFLTSPVIVAAKIFSSDLAFDPTHDTLQTPDGKAFKFRPPQGVELPSAGFIAGDSSYIPEPNPQPVPETEVTIDPKSDRLEALEPFEPYQGGEMENLKVAVKVKGKCTTDHISAAGKWLKYKGHLSNICNNTLIGAMNAATGEVNRAYDNGKGMTIPELMWKWKKDGQPWLVVAEHNYGEGSAREHAALQPRAMNGRIILTKSFARIHETNLKKQGVLPLTFVNEADYEKIDAEDKVSTRGIEQLLEGVLDQPITLVVTKKDGSVVEIPCKHTMSKDQIEFFKAGSALNLIREKAHSGVVNQKVIDSIKQQPDHYADAYIFNRHFVIAKGDQLGLPFHLKGVQVGDTIRLDKIASFGSRDFTLFGNPYVDPSLFTIEAVVLSFPKSALSVRVKHKRRHRHDRVMKHKQTYTILRVTELKLN</sequence>
<dbReference type="EC" id="4.2.1.-"/>
<dbReference type="EMBL" id="CU329671">
    <property type="protein sequence ID" value="CAB83173.3"/>
    <property type="molecule type" value="Genomic_DNA"/>
</dbReference>
<dbReference type="RefSeq" id="NP_596189.3">
    <property type="nucleotide sequence ID" value="NM_001022108.3"/>
</dbReference>
<dbReference type="SMR" id="Q9P7D4"/>
<dbReference type="BioGRID" id="277859">
    <property type="interactions" value="7"/>
</dbReference>
<dbReference type="ComplexPortal" id="CPX-10323">
    <property type="entry name" value="54S mitochondrial large ribosomal subunit"/>
</dbReference>
<dbReference type="FunCoup" id="Q9P7D4">
    <property type="interactions" value="368"/>
</dbReference>
<dbReference type="STRING" id="284812.Q9P7D4"/>
<dbReference type="iPTMnet" id="Q9P7D4"/>
<dbReference type="PaxDb" id="4896-SPBP4H10.15.1"/>
<dbReference type="EnsemblFungi" id="SPBP4H10.15.1">
    <molecule id="Q9P7D4-1"/>
    <property type="protein sequence ID" value="SPBP4H10.15.1:pep"/>
    <property type="gene ID" value="SPBP4H10.15"/>
</dbReference>
<dbReference type="GeneID" id="2541348"/>
<dbReference type="KEGG" id="spo:2541348"/>
<dbReference type="PomBase" id="SPBP4H10.15">
    <property type="gene designation" value="aco2"/>
</dbReference>
<dbReference type="VEuPathDB" id="FungiDB:SPBP4H10.15"/>
<dbReference type="eggNOG" id="KOG0453">
    <property type="taxonomic scope" value="Eukaryota"/>
</dbReference>
<dbReference type="HOGENOM" id="CLU_006714_2_2_1"/>
<dbReference type="InParanoid" id="Q9P7D4"/>
<dbReference type="OMA" id="KWPETFG"/>
<dbReference type="BRENDA" id="4.2.1.3">
    <property type="organism ID" value="5613"/>
</dbReference>
<dbReference type="UniPathway" id="UPA00033">
    <property type="reaction ID" value="UER00029"/>
</dbReference>
<dbReference type="PRO" id="PR:Q9P7D4"/>
<dbReference type="Proteomes" id="UP000002485">
    <property type="component" value="Chromosome II"/>
</dbReference>
<dbReference type="GO" id="GO:0005737">
    <property type="term" value="C:cytoplasm"/>
    <property type="evidence" value="ECO:0000314"/>
    <property type="project" value="PomBase"/>
</dbReference>
<dbReference type="GO" id="GO:0005829">
    <property type="term" value="C:cytosol"/>
    <property type="evidence" value="ECO:0000318"/>
    <property type="project" value="GO_Central"/>
</dbReference>
<dbReference type="GO" id="GO:0005762">
    <property type="term" value="C:mitochondrial large ribosomal subunit"/>
    <property type="evidence" value="ECO:0000266"/>
    <property type="project" value="PomBase"/>
</dbReference>
<dbReference type="GO" id="GO:0005739">
    <property type="term" value="C:mitochondrion"/>
    <property type="evidence" value="ECO:0000314"/>
    <property type="project" value="PomBase"/>
</dbReference>
<dbReference type="GO" id="GO:0005634">
    <property type="term" value="C:nucleus"/>
    <property type="evidence" value="ECO:0000314"/>
    <property type="project" value="PomBase"/>
</dbReference>
<dbReference type="GO" id="GO:0051539">
    <property type="term" value="F:4 iron, 4 sulfur cluster binding"/>
    <property type="evidence" value="ECO:0000318"/>
    <property type="project" value="GO_Central"/>
</dbReference>
<dbReference type="GO" id="GO:0003994">
    <property type="term" value="F:aconitate hydratase activity"/>
    <property type="evidence" value="ECO:0000318"/>
    <property type="project" value="GO_Central"/>
</dbReference>
<dbReference type="GO" id="GO:0046872">
    <property type="term" value="F:metal ion binding"/>
    <property type="evidence" value="ECO:0007669"/>
    <property type="project" value="UniProtKB-KW"/>
</dbReference>
<dbReference type="GO" id="GO:0003735">
    <property type="term" value="F:structural constituent of ribosome"/>
    <property type="evidence" value="ECO:0000266"/>
    <property type="project" value="PomBase"/>
</dbReference>
<dbReference type="GO" id="GO:0019878">
    <property type="term" value="P:lysine biosynthetic process via aminoadipic acid"/>
    <property type="evidence" value="ECO:0007669"/>
    <property type="project" value="UniProtKB-UniPathway"/>
</dbReference>
<dbReference type="GO" id="GO:0032543">
    <property type="term" value="P:mitochondrial translation"/>
    <property type="evidence" value="ECO:0000315"/>
    <property type="project" value="PomBase"/>
</dbReference>
<dbReference type="GO" id="GO:0006099">
    <property type="term" value="P:tricarboxylic acid cycle"/>
    <property type="evidence" value="ECO:0000250"/>
    <property type="project" value="PomBase"/>
</dbReference>
<dbReference type="FunFam" id="3.20.19.10:FF:000002">
    <property type="entry name" value="Aconitate hydratase, mitochondrial"/>
    <property type="match status" value="1"/>
</dbReference>
<dbReference type="FunFam" id="3.30.499.10:FF:000003">
    <property type="entry name" value="Aconitate hydratase, mitochondrial"/>
    <property type="match status" value="1"/>
</dbReference>
<dbReference type="FunFam" id="3.30.499.10:FF:000004">
    <property type="entry name" value="Aconitate hydratase, mitochondrial"/>
    <property type="match status" value="1"/>
</dbReference>
<dbReference type="FunFam" id="3.40.1060.10:FF:000001">
    <property type="entry name" value="Aconitate hydratase, mitochondrial"/>
    <property type="match status" value="1"/>
</dbReference>
<dbReference type="Gene3D" id="3.40.1060.10">
    <property type="entry name" value="Aconitase, Domain 2"/>
    <property type="match status" value="1"/>
</dbReference>
<dbReference type="Gene3D" id="3.30.499.10">
    <property type="entry name" value="Aconitase, domain 3"/>
    <property type="match status" value="2"/>
</dbReference>
<dbReference type="Gene3D" id="3.20.19.10">
    <property type="entry name" value="Aconitase, domain 4"/>
    <property type="match status" value="1"/>
</dbReference>
<dbReference type="InterPro" id="IPR015931">
    <property type="entry name" value="Acnase/IPM_dHydase_lsu_aba_1/3"/>
</dbReference>
<dbReference type="InterPro" id="IPR001030">
    <property type="entry name" value="Acoase/IPM_deHydtase_lsu_aba"/>
</dbReference>
<dbReference type="InterPro" id="IPR015928">
    <property type="entry name" value="Aconitase/3IPM_dehydase_swvl"/>
</dbReference>
<dbReference type="InterPro" id="IPR050926">
    <property type="entry name" value="Aconitase/IPM_isomerase"/>
</dbReference>
<dbReference type="InterPro" id="IPR018136">
    <property type="entry name" value="Aconitase_4Fe-4S_BS"/>
</dbReference>
<dbReference type="InterPro" id="IPR036008">
    <property type="entry name" value="Aconitase_4Fe-4S_dom"/>
</dbReference>
<dbReference type="InterPro" id="IPR015932">
    <property type="entry name" value="Aconitase_dom2"/>
</dbReference>
<dbReference type="InterPro" id="IPR006248">
    <property type="entry name" value="Aconitase_mito-like"/>
</dbReference>
<dbReference type="InterPro" id="IPR000573">
    <property type="entry name" value="AconitaseA/IPMdHydase_ssu_swvl"/>
</dbReference>
<dbReference type="InterPro" id="IPR028909">
    <property type="entry name" value="bL21-like"/>
</dbReference>
<dbReference type="InterPro" id="IPR036164">
    <property type="entry name" value="bL21-like_sf"/>
</dbReference>
<dbReference type="NCBIfam" id="TIGR01340">
    <property type="entry name" value="aconitase_mito"/>
    <property type="match status" value="1"/>
</dbReference>
<dbReference type="NCBIfam" id="NF005558">
    <property type="entry name" value="PRK07229.1"/>
    <property type="match status" value="1"/>
</dbReference>
<dbReference type="PANTHER" id="PTHR43160">
    <property type="entry name" value="ACONITATE HYDRATASE B"/>
    <property type="match status" value="1"/>
</dbReference>
<dbReference type="PANTHER" id="PTHR43160:SF2">
    <property type="entry name" value="HOMOCITRATE DEHYDRATASE, MITOCHONDRIAL"/>
    <property type="match status" value="1"/>
</dbReference>
<dbReference type="Pfam" id="PF00330">
    <property type="entry name" value="Aconitase"/>
    <property type="match status" value="1"/>
</dbReference>
<dbReference type="Pfam" id="PF00694">
    <property type="entry name" value="Aconitase_C"/>
    <property type="match status" value="1"/>
</dbReference>
<dbReference type="Pfam" id="PF00829">
    <property type="entry name" value="Ribosomal_L21p"/>
    <property type="match status" value="1"/>
</dbReference>
<dbReference type="PRINTS" id="PR00415">
    <property type="entry name" value="ACONITASE"/>
</dbReference>
<dbReference type="SUPFAM" id="SSF53732">
    <property type="entry name" value="Aconitase iron-sulfur domain"/>
    <property type="match status" value="1"/>
</dbReference>
<dbReference type="SUPFAM" id="SSF141091">
    <property type="entry name" value="L21p-like"/>
    <property type="match status" value="1"/>
</dbReference>
<dbReference type="SUPFAM" id="SSF52016">
    <property type="entry name" value="LeuD/IlvD-like"/>
    <property type="match status" value="1"/>
</dbReference>
<dbReference type="PROSITE" id="PS00450">
    <property type="entry name" value="ACONITASE_1"/>
    <property type="match status" value="1"/>
</dbReference>
<dbReference type="PROSITE" id="PS01244">
    <property type="entry name" value="ACONITASE_2"/>
    <property type="match status" value="1"/>
</dbReference>
<proteinExistence type="inferred from homology"/>
<evidence type="ECO:0000250" key="1">
    <source>
        <dbReference type="UniProtKB" id="P20004"/>
    </source>
</evidence>
<evidence type="ECO:0000250" key="2">
    <source>
        <dbReference type="UniProtKB" id="P39533"/>
    </source>
</evidence>
<evidence type="ECO:0000250" key="3">
    <source>
        <dbReference type="UniProtKB" id="P40858"/>
    </source>
</evidence>
<evidence type="ECO:0000255" key="4"/>
<evidence type="ECO:0000269" key="5">
    <source>
    </source>
</evidence>
<evidence type="ECO:0000269" key="6">
    <source>
    </source>
</evidence>
<evidence type="ECO:0000303" key="7">
    <source>
    </source>
</evidence>
<evidence type="ECO:0000305" key="8"/>
<evidence type="ECO:0000305" key="9">
    <source>
    </source>
</evidence>
<feature type="transit peptide" description="Mitochondrion" evidence="4">
    <location>
        <begin position="1"/>
        <end position="30"/>
    </location>
</feature>
<feature type="chain" id="PRO_0000316198" description="Aconitase-ribosomal protein bL21m fusion protein">
    <location>
        <begin position="31"/>
        <end position="918"/>
    </location>
</feature>
<feature type="region of interest" description="Homocitrate dehydratase, mitochondrial" evidence="9">
    <location>
        <begin position="31"/>
        <end position="811"/>
    </location>
</feature>
<feature type="region of interest" description="Large ribosomal subunit protein bL21m" evidence="9">
    <location>
        <begin position="812"/>
        <end position="918"/>
    </location>
</feature>
<feature type="binding site" evidence="1">
    <location>
        <position position="105"/>
    </location>
    <ligand>
        <name>substrate</name>
    </ligand>
</feature>
<feature type="binding site" evidence="1">
    <location>
        <begin position="198"/>
        <end position="200"/>
    </location>
    <ligand>
        <name>substrate</name>
    </ligand>
</feature>
<feature type="binding site" evidence="1">
    <location>
        <position position="394"/>
    </location>
    <ligand>
        <name>[4Fe-4S] cluster</name>
        <dbReference type="ChEBI" id="CHEBI:49883"/>
    </ligand>
</feature>
<feature type="binding site" evidence="1">
    <location>
        <position position="457"/>
    </location>
    <ligand>
        <name>[4Fe-4S] cluster</name>
        <dbReference type="ChEBI" id="CHEBI:49883"/>
    </ligand>
</feature>
<feature type="binding site" evidence="1">
    <location>
        <position position="460"/>
    </location>
    <ligand>
        <name>[4Fe-4S] cluster</name>
        <dbReference type="ChEBI" id="CHEBI:49883"/>
    </ligand>
</feature>
<feature type="binding site" evidence="1">
    <location>
        <position position="484"/>
    </location>
    <ligand>
        <name>substrate</name>
    </ligand>
</feature>
<feature type="binding site" evidence="1">
    <location>
        <position position="489"/>
    </location>
    <ligand>
        <name>substrate</name>
    </ligand>
</feature>
<feature type="binding site" evidence="1">
    <location>
        <position position="619"/>
    </location>
    <ligand>
        <name>substrate</name>
    </ligand>
</feature>
<feature type="binding site" evidence="1">
    <location>
        <begin position="680"/>
        <end position="681"/>
    </location>
    <ligand>
        <name>substrate</name>
    </ligand>
</feature>
<feature type="splice variant" id="VSP_061939" description="In isoform Short." evidence="6">
    <location>
        <begin position="812"/>
        <end position="918"/>
    </location>
</feature>
<name>ACON2_SCHPO</name>
<keyword id="KW-0004">4Fe-4S</keyword>
<keyword id="KW-0025">Alternative splicing</keyword>
<keyword id="KW-0028">Amino-acid biosynthesis</keyword>
<keyword id="KW-0408">Iron</keyword>
<keyword id="KW-0411">Iron-sulfur</keyword>
<keyword id="KW-0456">Lyase</keyword>
<keyword id="KW-0457">Lysine biosynthesis</keyword>
<keyword id="KW-0479">Metal-binding</keyword>
<keyword id="KW-0496">Mitochondrion</keyword>
<keyword id="KW-0539">Nucleus</keyword>
<keyword id="KW-1185">Reference proteome</keyword>
<keyword id="KW-0809">Transit peptide</keyword>
<comment type="function">
    <text evidence="2">Catalyzes the reversible dehydration of (R)-homocitrate to cis-homoaconitate, a step in the alpha-aminoadipate pathway for lysine biosynthesis.</text>
</comment>
<comment type="function">
    <molecule>Isoform Long</molecule>
    <text evidence="3">Component of the mitochondrial ribosome (mitoribosome), a dedicated translation machinery responsible for the synthesis of mitochondrial genome-encoded proteins, including at least some of the essential transmembrane subunits of the mitochondrial respiratory chain. The mitoribosomes are attached to the mitochondrial inner membrane and translation products are cotranslationally integrated into the membrane.</text>
</comment>
<comment type="catalytic activity">
    <reaction>
        <text>(2R)-homocitrate = cis-homoaconitate + H2O</text>
        <dbReference type="Rhea" id="RHEA:26101"/>
        <dbReference type="ChEBI" id="CHEBI:15377"/>
        <dbReference type="ChEBI" id="CHEBI:58174"/>
        <dbReference type="ChEBI" id="CHEBI:58884"/>
    </reaction>
</comment>
<comment type="cofactor">
    <cofactor evidence="1">
        <name>[4Fe-4S] cluster</name>
        <dbReference type="ChEBI" id="CHEBI:49883"/>
    </cofactor>
    <text evidence="1">Binds 1 [4Fe-4S] cluster per subunit.</text>
</comment>
<comment type="pathway">
    <text evidence="2">Amino-acid biosynthesis; L-lysine biosynthesis via AAA pathway; L-alpha-aminoadipate from 2-oxoglutarate: step 2/5.</text>
</comment>
<comment type="subunit">
    <molecule>Isoform Long</molecule>
    <text evidence="3">Component of the mitochondrial large ribosomal subunit (mt-LSU). Mature yeast 74S mitochondrial ribosomes consist of a small (37S) and a large (54S) subunit. The 37S small subunit contains a 15S ribosomal RNA (15S mt-rRNA) and at least 32 different proteins. The 54S large subunit contains a 21S rRNA (21S mt-rRNA) and at least 45 different proteins.</text>
</comment>
<comment type="subcellular location">
    <molecule>Isoform Long</molecule>
    <subcellularLocation>
        <location evidence="5 6">Mitochondrion</location>
    </subcellularLocation>
    <subcellularLocation>
        <location evidence="6">Nucleus</location>
    </subcellularLocation>
</comment>
<comment type="subcellular location">
    <molecule>Isoform Short</molecule>
    <subcellularLocation>
        <location evidence="6">Mitochondrion</location>
    </subcellularLocation>
</comment>
<comment type="alternative products">
    <event type="alternative splicing"/>
    <isoform>
        <id>Q9P7D4-1</id>
        <name evidence="7">Long</name>
        <sequence type="displayed"/>
    </isoform>
    <isoform>
        <id>Q9P7D4-2</id>
        <name evidence="7">Short</name>
        <sequence type="described" ref="VSP_061939"/>
    </isoform>
</comment>
<comment type="miscellaneous">
    <molecule>Isoform Short</molecule>
    <text evidence="6">Produced by alternative selection of poly (A) site. Whereas the long isoform encompasses all the coding sequences of aconitase and bL21m, the short isoform has a poly (A) tail added at nucleotide position 2436 (relative to start codon), changing the codon 812 from TAT (for Tyr) to a TAA stop codon. Hence, the short transcript encompasses only the aconitase domain.</text>
</comment>
<comment type="miscellaneous">
    <text evidence="6">There seems to be no cleavage of the fusion protein, the ribosomal bL21m domain may not exist as a single domain form.</text>
</comment>
<comment type="similarity">
    <text evidence="8">In the N-terminal section; belongs to the aconitase/IPM isomerase family.</text>
</comment>
<comment type="similarity">
    <text evidence="8">In the C-terminal section; belongs to the bacterial ribosomal protein bL21 family.</text>
</comment>
<gene>
    <name type="primary">aco2</name>
    <name type="synonym">mrpl49</name>
    <name type="ORF">SPBP4H10.15</name>
</gene>
<reference key="1">
    <citation type="journal article" date="2002" name="Nature">
        <title>The genome sequence of Schizosaccharomyces pombe.</title>
        <authorList>
            <person name="Wood V."/>
            <person name="Gwilliam R."/>
            <person name="Rajandream M.A."/>
            <person name="Lyne M.H."/>
            <person name="Lyne R."/>
            <person name="Stewart A."/>
            <person name="Sgouros J.G."/>
            <person name="Peat N."/>
            <person name="Hayles J."/>
            <person name="Baker S.G."/>
            <person name="Basham D."/>
            <person name="Bowman S."/>
            <person name="Brooks K."/>
            <person name="Brown D."/>
            <person name="Brown S."/>
            <person name="Chillingworth T."/>
            <person name="Churcher C.M."/>
            <person name="Collins M."/>
            <person name="Connor R."/>
            <person name="Cronin A."/>
            <person name="Davis P."/>
            <person name="Feltwell T."/>
            <person name="Fraser A."/>
            <person name="Gentles S."/>
            <person name="Goble A."/>
            <person name="Hamlin N."/>
            <person name="Harris D.E."/>
            <person name="Hidalgo J."/>
            <person name="Hodgson G."/>
            <person name="Holroyd S."/>
            <person name="Hornsby T."/>
            <person name="Howarth S."/>
            <person name="Huckle E.J."/>
            <person name="Hunt S."/>
            <person name="Jagels K."/>
            <person name="James K.D."/>
            <person name="Jones L."/>
            <person name="Jones M."/>
            <person name="Leather S."/>
            <person name="McDonald S."/>
            <person name="McLean J."/>
            <person name="Mooney P."/>
            <person name="Moule S."/>
            <person name="Mungall K.L."/>
            <person name="Murphy L.D."/>
            <person name="Niblett D."/>
            <person name="Odell C."/>
            <person name="Oliver K."/>
            <person name="O'Neil S."/>
            <person name="Pearson D."/>
            <person name="Quail M.A."/>
            <person name="Rabbinowitsch E."/>
            <person name="Rutherford K.M."/>
            <person name="Rutter S."/>
            <person name="Saunders D."/>
            <person name="Seeger K."/>
            <person name="Sharp S."/>
            <person name="Skelton J."/>
            <person name="Simmonds M.N."/>
            <person name="Squares R."/>
            <person name="Squares S."/>
            <person name="Stevens K."/>
            <person name="Taylor K."/>
            <person name="Taylor R.G."/>
            <person name="Tivey A."/>
            <person name="Walsh S.V."/>
            <person name="Warren T."/>
            <person name="Whitehead S."/>
            <person name="Woodward J.R."/>
            <person name="Volckaert G."/>
            <person name="Aert R."/>
            <person name="Robben J."/>
            <person name="Grymonprez B."/>
            <person name="Weltjens I."/>
            <person name="Vanstreels E."/>
            <person name="Rieger M."/>
            <person name="Schaefer M."/>
            <person name="Mueller-Auer S."/>
            <person name="Gabel C."/>
            <person name="Fuchs M."/>
            <person name="Duesterhoeft A."/>
            <person name="Fritzc C."/>
            <person name="Holzer E."/>
            <person name="Moestl D."/>
            <person name="Hilbert H."/>
            <person name="Borzym K."/>
            <person name="Langer I."/>
            <person name="Beck A."/>
            <person name="Lehrach H."/>
            <person name="Reinhardt R."/>
            <person name="Pohl T.M."/>
            <person name="Eger P."/>
            <person name="Zimmermann W."/>
            <person name="Wedler H."/>
            <person name="Wambutt R."/>
            <person name="Purnelle B."/>
            <person name="Goffeau A."/>
            <person name="Cadieu E."/>
            <person name="Dreano S."/>
            <person name="Gloux S."/>
            <person name="Lelaure V."/>
            <person name="Mottier S."/>
            <person name="Galibert F."/>
            <person name="Aves S.J."/>
            <person name="Xiang Z."/>
            <person name="Hunt C."/>
            <person name="Moore K."/>
            <person name="Hurst S.M."/>
            <person name="Lucas M."/>
            <person name="Rochet M."/>
            <person name="Gaillardin C."/>
            <person name="Tallada V.A."/>
            <person name="Garzon A."/>
            <person name="Thode G."/>
            <person name="Daga R.R."/>
            <person name="Cruzado L."/>
            <person name="Jimenez J."/>
            <person name="Sanchez M."/>
            <person name="del Rey F."/>
            <person name="Benito J."/>
            <person name="Dominguez A."/>
            <person name="Revuelta J.L."/>
            <person name="Moreno S."/>
            <person name="Armstrong J."/>
            <person name="Forsburg S.L."/>
            <person name="Cerutti L."/>
            <person name="Lowe T."/>
            <person name="McCombie W.R."/>
            <person name="Paulsen I."/>
            <person name="Potashkin J."/>
            <person name="Shpakovski G.V."/>
            <person name="Ussery D."/>
            <person name="Barrell B.G."/>
            <person name="Nurse P."/>
        </authorList>
    </citation>
    <scope>NUCLEOTIDE SEQUENCE [LARGE SCALE GENOMIC DNA]</scope>
    <source>
        <strain>972 / ATCC 24843</strain>
    </source>
</reference>
<reference key="2">
    <citation type="journal article" date="2011" name="Science">
        <title>Comparative functional genomics of the fission yeasts.</title>
        <authorList>
            <person name="Rhind N."/>
            <person name="Chen Z."/>
            <person name="Yassour M."/>
            <person name="Thompson D.A."/>
            <person name="Haas B.J."/>
            <person name="Habib N."/>
            <person name="Wapinski I."/>
            <person name="Roy S."/>
            <person name="Lin M.F."/>
            <person name="Heiman D.I."/>
            <person name="Young S.K."/>
            <person name="Furuya K."/>
            <person name="Guo Y."/>
            <person name="Pidoux A."/>
            <person name="Chen H.M."/>
            <person name="Robbertse B."/>
            <person name="Goldberg J.M."/>
            <person name="Aoki K."/>
            <person name="Bayne E.H."/>
            <person name="Berlin A.M."/>
            <person name="Desjardins C.A."/>
            <person name="Dobbs E."/>
            <person name="Dukaj L."/>
            <person name="Fan L."/>
            <person name="FitzGerald M.G."/>
            <person name="French C."/>
            <person name="Gujja S."/>
            <person name="Hansen K."/>
            <person name="Keifenheim D."/>
            <person name="Levin J.Z."/>
            <person name="Mosher R.A."/>
            <person name="Mueller C.A."/>
            <person name="Pfiffner J."/>
            <person name="Priest M."/>
            <person name="Russ C."/>
            <person name="Smialowska A."/>
            <person name="Swoboda P."/>
            <person name="Sykes S.M."/>
            <person name="Vaughn M."/>
            <person name="Vengrova S."/>
            <person name="Yoder R."/>
            <person name="Zeng Q."/>
            <person name="Allshire R."/>
            <person name="Baulcombe D."/>
            <person name="Birren B.W."/>
            <person name="Brown W."/>
            <person name="Ekwall K."/>
            <person name="Kellis M."/>
            <person name="Leatherwood J."/>
            <person name="Levin H."/>
            <person name="Margalit H."/>
            <person name="Martienssen R."/>
            <person name="Nieduszynski C.A."/>
            <person name="Spatafora J.W."/>
            <person name="Friedman N."/>
            <person name="Dalgaard J.Z."/>
            <person name="Baumann P."/>
            <person name="Niki H."/>
            <person name="Regev A."/>
            <person name="Nusbaum C."/>
        </authorList>
    </citation>
    <scope>REVISION OF GENE MODEL</scope>
</reference>
<reference key="3">
    <citation type="journal article" date="2006" name="Nat. Biotechnol.">
        <title>ORFeome cloning and global analysis of protein localization in the fission yeast Schizosaccharomyces pombe.</title>
        <authorList>
            <person name="Matsuyama A."/>
            <person name="Arai R."/>
            <person name="Yashiroda Y."/>
            <person name="Shirai A."/>
            <person name="Kamata A."/>
            <person name="Sekido S."/>
            <person name="Kobayashi Y."/>
            <person name="Hashimoto A."/>
            <person name="Hamamoto M."/>
            <person name="Hiraoka Y."/>
            <person name="Horinouchi S."/>
            <person name="Yoshida M."/>
        </authorList>
    </citation>
    <scope>SUBCELLULAR LOCATION [LARGE SCALE ANALYSIS]</scope>
</reference>
<reference key="4">
    <citation type="journal article" date="2015" name="FEBS Lett.">
        <title>Essential function of Aco2, a fusion protein of aconitase and mitochondrial ribosomal protein bL21, in mitochondrial translation in fission yeast.</title>
        <authorList>
            <person name="Jung S.J."/>
            <person name="Seo Y."/>
            <person name="Lee K.C."/>
            <person name="Lee D."/>
            <person name="Roe J.H."/>
        </authorList>
    </citation>
    <scope>FUNCTION</scope>
    <scope>SUBCELLULAR LOCATION</scope>
    <scope>ALTERNATIVE SPLICING</scope>
</reference>
<protein>
    <recommendedName>
        <fullName evidence="8">Aconitase-ribosomal protein bL21m fusion protein</fullName>
    </recommendedName>
    <domain>
        <recommendedName>
            <fullName>Homocitrate dehydratase, mitochondrial</fullName>
            <ecNumber>4.2.1.-</ecNumber>
        </recommendedName>
        <alternativeName>
            <fullName>Aconitase 2</fullName>
        </alternativeName>
    </domain>
    <domain>
        <recommendedName>
            <fullName evidence="8">Large ribosomal subunit protein bL21m</fullName>
        </recommendedName>
        <alternativeName>
            <fullName>54S ribosomal protein L49, mitochondrial</fullName>
        </alternativeName>
    </domain>
</protein>
<accession>Q9P7D4</accession>